<keyword id="KW-0028">Amino-acid biosynthesis</keyword>
<keyword id="KW-0055">Arginine biosynthesis</keyword>
<keyword id="KW-0963">Cytoplasm</keyword>
<keyword id="KW-0808">Transferase</keyword>
<organism>
    <name type="scientific">Mycobacterium bovis (strain BCG / Pasteur 1173P2)</name>
    <dbReference type="NCBI Taxonomy" id="410289"/>
    <lineage>
        <taxon>Bacteria</taxon>
        <taxon>Bacillati</taxon>
        <taxon>Actinomycetota</taxon>
        <taxon>Actinomycetes</taxon>
        <taxon>Mycobacteriales</taxon>
        <taxon>Mycobacteriaceae</taxon>
        <taxon>Mycobacterium</taxon>
        <taxon>Mycobacterium tuberculosis complex</taxon>
    </lineage>
</organism>
<name>OTC_MYCBP</name>
<comment type="function">
    <text evidence="1">Reversibly catalyzes the transfer of the carbamoyl group from carbamoyl phosphate (CP) to the N(epsilon) atom of ornithine (ORN) to produce L-citrulline.</text>
</comment>
<comment type="catalytic activity">
    <reaction evidence="2">
        <text>carbamoyl phosphate + L-ornithine = L-citrulline + phosphate + H(+)</text>
        <dbReference type="Rhea" id="RHEA:19513"/>
        <dbReference type="ChEBI" id="CHEBI:15378"/>
        <dbReference type="ChEBI" id="CHEBI:43474"/>
        <dbReference type="ChEBI" id="CHEBI:46911"/>
        <dbReference type="ChEBI" id="CHEBI:57743"/>
        <dbReference type="ChEBI" id="CHEBI:58228"/>
        <dbReference type="EC" id="2.1.3.3"/>
    </reaction>
</comment>
<comment type="pathway">
    <text evidence="2">Amino-acid biosynthesis; L-arginine biosynthesis; L-arginine from L-ornithine and carbamoyl phosphate: step 1/3.</text>
</comment>
<comment type="subcellular location">
    <subcellularLocation>
        <location evidence="2">Cytoplasm</location>
    </subcellularLocation>
</comment>
<comment type="similarity">
    <text evidence="2">Belongs to the aspartate/ornithine carbamoyltransferase superfamily. OTCase family.</text>
</comment>
<feature type="chain" id="PRO_1000065103" description="Ornithine carbamoyltransferase">
    <location>
        <begin position="1"/>
        <end position="307"/>
    </location>
</feature>
<feature type="binding site" evidence="2">
    <location>
        <begin position="50"/>
        <end position="53"/>
    </location>
    <ligand>
        <name>carbamoyl phosphate</name>
        <dbReference type="ChEBI" id="CHEBI:58228"/>
    </ligand>
</feature>
<feature type="binding site" evidence="2">
    <location>
        <position position="77"/>
    </location>
    <ligand>
        <name>carbamoyl phosphate</name>
        <dbReference type="ChEBI" id="CHEBI:58228"/>
    </ligand>
</feature>
<feature type="binding site" evidence="2">
    <location>
        <position position="101"/>
    </location>
    <ligand>
        <name>carbamoyl phosphate</name>
        <dbReference type="ChEBI" id="CHEBI:58228"/>
    </ligand>
</feature>
<feature type="binding site" evidence="2">
    <location>
        <begin position="128"/>
        <end position="131"/>
    </location>
    <ligand>
        <name>carbamoyl phosphate</name>
        <dbReference type="ChEBI" id="CHEBI:58228"/>
    </ligand>
</feature>
<feature type="binding site" evidence="2">
    <location>
        <position position="160"/>
    </location>
    <ligand>
        <name>L-ornithine</name>
        <dbReference type="ChEBI" id="CHEBI:46911"/>
    </ligand>
</feature>
<feature type="binding site" evidence="2">
    <location>
        <position position="224"/>
    </location>
    <ligand>
        <name>L-ornithine</name>
        <dbReference type="ChEBI" id="CHEBI:46911"/>
    </ligand>
</feature>
<feature type="binding site" evidence="2">
    <location>
        <begin position="228"/>
        <end position="229"/>
    </location>
    <ligand>
        <name>L-ornithine</name>
        <dbReference type="ChEBI" id="CHEBI:46911"/>
    </ligand>
</feature>
<feature type="binding site" evidence="2">
    <location>
        <begin position="264"/>
        <end position="265"/>
    </location>
    <ligand>
        <name>carbamoyl phosphate</name>
        <dbReference type="ChEBI" id="CHEBI:58228"/>
    </ligand>
</feature>
<feature type="binding site" evidence="2">
    <location>
        <position position="292"/>
    </location>
    <ligand>
        <name>carbamoyl phosphate</name>
        <dbReference type="ChEBI" id="CHEBI:58228"/>
    </ligand>
</feature>
<reference key="1">
    <citation type="journal article" date="2007" name="Proc. Natl. Acad. Sci. U.S.A.">
        <title>Genome plasticity of BCG and impact on vaccine efficacy.</title>
        <authorList>
            <person name="Brosch R."/>
            <person name="Gordon S.V."/>
            <person name="Garnier T."/>
            <person name="Eiglmeier K."/>
            <person name="Frigui W."/>
            <person name="Valenti P."/>
            <person name="Dos Santos S."/>
            <person name="Duthoy S."/>
            <person name="Lacroix C."/>
            <person name="Garcia-Pelayo C."/>
            <person name="Inwald J.K."/>
            <person name="Golby P."/>
            <person name="Garcia J.N."/>
            <person name="Hewinson R.G."/>
            <person name="Behr M.A."/>
            <person name="Quail M.A."/>
            <person name="Churcher C."/>
            <person name="Barrell B.G."/>
            <person name="Parkhill J."/>
            <person name="Cole S.T."/>
        </authorList>
    </citation>
    <scope>NUCLEOTIDE SEQUENCE [LARGE SCALE GENOMIC DNA]</scope>
    <source>
        <strain>BCG / Pasteur 1173P2</strain>
    </source>
</reference>
<sequence length="307" mass="33057">MIRHFLRDDDLSPAEQAEVLELAAELKKDPVSRRPLQGPRGVAVIFDKNSTRTRFSFELGIAQLGGHAVVVDSGSTQLGRDETLQDTAKVLSRYVDAIVWRTFGQERLDAMASVATVPVINALSDEFHPCQVLADLQTIAERKGALRGLRLSYFGDGANNMAHSLLLGGVTAGIHVTVAAPEGFLPDPSVRAAAERRAQDTGASVTVTADAHAAAAGADVLVTDTWTSMGQENDGLDRVKPFRPFQLNSRLLALADSDAIVLHCLPAHRGDEITDAVMDGPASAVWDEAENRLHAQKALLVWLLERS</sequence>
<evidence type="ECO:0000250" key="1"/>
<evidence type="ECO:0000255" key="2">
    <source>
        <dbReference type="HAMAP-Rule" id="MF_01109"/>
    </source>
</evidence>
<accession>A1KJ73</accession>
<gene>
    <name evidence="2" type="primary">argF</name>
    <name type="ordered locus">BCG_1695</name>
</gene>
<proteinExistence type="inferred from homology"/>
<dbReference type="EC" id="2.1.3.3" evidence="2"/>
<dbReference type="EMBL" id="AM408590">
    <property type="protein sequence ID" value="CAL71682.1"/>
    <property type="molecule type" value="Genomic_DNA"/>
</dbReference>
<dbReference type="RefSeq" id="WP_003408165.1">
    <property type="nucleotide sequence ID" value="NC_008769.1"/>
</dbReference>
<dbReference type="SMR" id="A1KJ73"/>
<dbReference type="KEGG" id="mbb:BCG_1695"/>
<dbReference type="HOGENOM" id="CLU_043846_3_2_11"/>
<dbReference type="UniPathway" id="UPA00068">
    <property type="reaction ID" value="UER00112"/>
</dbReference>
<dbReference type="Proteomes" id="UP000001472">
    <property type="component" value="Chromosome"/>
</dbReference>
<dbReference type="GO" id="GO:0005737">
    <property type="term" value="C:cytoplasm"/>
    <property type="evidence" value="ECO:0007669"/>
    <property type="project" value="UniProtKB-SubCell"/>
</dbReference>
<dbReference type="GO" id="GO:0016597">
    <property type="term" value="F:amino acid binding"/>
    <property type="evidence" value="ECO:0007669"/>
    <property type="project" value="InterPro"/>
</dbReference>
<dbReference type="GO" id="GO:0004585">
    <property type="term" value="F:ornithine carbamoyltransferase activity"/>
    <property type="evidence" value="ECO:0007669"/>
    <property type="project" value="UniProtKB-UniRule"/>
</dbReference>
<dbReference type="GO" id="GO:0042450">
    <property type="term" value="P:arginine biosynthetic process via ornithine"/>
    <property type="evidence" value="ECO:0007669"/>
    <property type="project" value="TreeGrafter"/>
</dbReference>
<dbReference type="GO" id="GO:0019240">
    <property type="term" value="P:citrulline biosynthetic process"/>
    <property type="evidence" value="ECO:0007669"/>
    <property type="project" value="TreeGrafter"/>
</dbReference>
<dbReference type="GO" id="GO:0006526">
    <property type="term" value="P:L-arginine biosynthetic process"/>
    <property type="evidence" value="ECO:0007669"/>
    <property type="project" value="UniProtKB-UniRule"/>
</dbReference>
<dbReference type="FunFam" id="3.40.50.1370:FF:000008">
    <property type="entry name" value="Ornithine carbamoyltransferase"/>
    <property type="match status" value="1"/>
</dbReference>
<dbReference type="Gene3D" id="3.40.50.1370">
    <property type="entry name" value="Aspartate/ornithine carbamoyltransferase"/>
    <property type="match status" value="2"/>
</dbReference>
<dbReference type="HAMAP" id="MF_01109">
    <property type="entry name" value="OTCase"/>
    <property type="match status" value="1"/>
</dbReference>
<dbReference type="InterPro" id="IPR006132">
    <property type="entry name" value="Asp/Orn_carbamoyltranf_P-bd"/>
</dbReference>
<dbReference type="InterPro" id="IPR006130">
    <property type="entry name" value="Asp/Orn_carbamoylTrfase"/>
</dbReference>
<dbReference type="InterPro" id="IPR036901">
    <property type="entry name" value="Asp/Orn_carbamoylTrfase_sf"/>
</dbReference>
<dbReference type="InterPro" id="IPR006131">
    <property type="entry name" value="Asp_carbamoyltransf_Asp/Orn-bd"/>
</dbReference>
<dbReference type="InterPro" id="IPR002292">
    <property type="entry name" value="Orn/put_carbamltrans"/>
</dbReference>
<dbReference type="InterPro" id="IPR024904">
    <property type="entry name" value="OTCase_ArgI"/>
</dbReference>
<dbReference type="NCBIfam" id="TIGR00658">
    <property type="entry name" value="orni_carb_tr"/>
    <property type="match status" value="1"/>
</dbReference>
<dbReference type="NCBIfam" id="NF001986">
    <property type="entry name" value="PRK00779.1"/>
    <property type="match status" value="1"/>
</dbReference>
<dbReference type="PANTHER" id="PTHR45753">
    <property type="entry name" value="ORNITHINE CARBAMOYLTRANSFERASE, MITOCHONDRIAL"/>
    <property type="match status" value="1"/>
</dbReference>
<dbReference type="PANTHER" id="PTHR45753:SF3">
    <property type="entry name" value="ORNITHINE TRANSCARBAMYLASE, MITOCHONDRIAL"/>
    <property type="match status" value="1"/>
</dbReference>
<dbReference type="Pfam" id="PF00185">
    <property type="entry name" value="OTCace"/>
    <property type="match status" value="1"/>
</dbReference>
<dbReference type="Pfam" id="PF02729">
    <property type="entry name" value="OTCace_N"/>
    <property type="match status" value="1"/>
</dbReference>
<dbReference type="PRINTS" id="PR00100">
    <property type="entry name" value="AOTCASE"/>
</dbReference>
<dbReference type="PRINTS" id="PR00102">
    <property type="entry name" value="OTCASE"/>
</dbReference>
<dbReference type="SUPFAM" id="SSF53671">
    <property type="entry name" value="Aspartate/ornithine carbamoyltransferase"/>
    <property type="match status" value="1"/>
</dbReference>
<dbReference type="PROSITE" id="PS00097">
    <property type="entry name" value="CARBAMOYLTRANSFERASE"/>
    <property type="match status" value="1"/>
</dbReference>
<protein>
    <recommendedName>
        <fullName evidence="2">Ornithine carbamoyltransferase</fullName>
        <shortName evidence="2">OTCase</shortName>
        <ecNumber evidence="2">2.1.3.3</ecNumber>
    </recommendedName>
</protein>